<feature type="chain" id="PRO_0000243577" description="Glutamate-1-semialdehyde 2,1-aminomutase">
    <location>
        <begin position="1"/>
        <end position="432"/>
    </location>
</feature>
<feature type="modified residue" description="N6-(pyridoxal phosphate)lysine" evidence="1">
    <location>
        <position position="272"/>
    </location>
</feature>
<evidence type="ECO:0000255" key="1">
    <source>
        <dbReference type="HAMAP-Rule" id="MF_00375"/>
    </source>
</evidence>
<name>GSA_GLOVI</name>
<keyword id="KW-0149">Chlorophyll biosynthesis</keyword>
<keyword id="KW-0963">Cytoplasm</keyword>
<keyword id="KW-0413">Isomerase</keyword>
<keyword id="KW-0627">Porphyrin biosynthesis</keyword>
<keyword id="KW-0663">Pyridoxal phosphate</keyword>
<keyword id="KW-1185">Reference proteome</keyword>
<accession>Q7NPI4</accession>
<reference key="1">
    <citation type="journal article" date="2003" name="DNA Res.">
        <title>Complete genome structure of Gloeobacter violaceus PCC 7421, a cyanobacterium that lacks thylakoids.</title>
        <authorList>
            <person name="Nakamura Y."/>
            <person name="Kaneko T."/>
            <person name="Sato S."/>
            <person name="Mimuro M."/>
            <person name="Miyashita H."/>
            <person name="Tsuchiya T."/>
            <person name="Sasamoto S."/>
            <person name="Watanabe A."/>
            <person name="Kawashima K."/>
            <person name="Kishida Y."/>
            <person name="Kiyokawa C."/>
            <person name="Kohara M."/>
            <person name="Matsumoto M."/>
            <person name="Matsuno A."/>
            <person name="Nakazaki N."/>
            <person name="Shimpo S."/>
            <person name="Takeuchi C."/>
            <person name="Yamada M."/>
            <person name="Tabata S."/>
        </authorList>
    </citation>
    <scope>NUCLEOTIDE SEQUENCE [LARGE SCALE GENOMIC DNA]</scope>
    <source>
        <strain>ATCC 29082 / PCC 7421</strain>
    </source>
</reference>
<dbReference type="EC" id="5.4.3.8" evidence="1"/>
<dbReference type="EMBL" id="BA000045">
    <property type="protein sequence ID" value="BAC88012.1"/>
    <property type="molecule type" value="Genomic_DNA"/>
</dbReference>
<dbReference type="RefSeq" id="NP_923017.1">
    <property type="nucleotide sequence ID" value="NC_005125.1"/>
</dbReference>
<dbReference type="RefSeq" id="WP_011140075.1">
    <property type="nucleotide sequence ID" value="NC_005125.1"/>
</dbReference>
<dbReference type="SMR" id="Q7NPI4"/>
<dbReference type="FunCoup" id="Q7NPI4">
    <property type="interactions" value="304"/>
</dbReference>
<dbReference type="STRING" id="251221.gene:10757540"/>
<dbReference type="EnsemblBacteria" id="BAC88012">
    <property type="protein sequence ID" value="BAC88012"/>
    <property type="gene ID" value="BAC88012"/>
</dbReference>
<dbReference type="KEGG" id="gvi:glr0071"/>
<dbReference type="PATRIC" id="fig|251221.4.peg.74"/>
<dbReference type="eggNOG" id="COG0001">
    <property type="taxonomic scope" value="Bacteria"/>
</dbReference>
<dbReference type="HOGENOM" id="CLU_016922_1_5_3"/>
<dbReference type="InParanoid" id="Q7NPI4"/>
<dbReference type="OrthoDB" id="9807885at2"/>
<dbReference type="PhylomeDB" id="Q7NPI4"/>
<dbReference type="UniPathway" id="UPA00251">
    <property type="reaction ID" value="UER00317"/>
</dbReference>
<dbReference type="UniPathway" id="UPA00668"/>
<dbReference type="Proteomes" id="UP000000557">
    <property type="component" value="Chromosome"/>
</dbReference>
<dbReference type="GO" id="GO:0005737">
    <property type="term" value="C:cytoplasm"/>
    <property type="evidence" value="ECO:0007669"/>
    <property type="project" value="UniProtKB-SubCell"/>
</dbReference>
<dbReference type="GO" id="GO:0042286">
    <property type="term" value="F:glutamate-1-semialdehyde 2,1-aminomutase activity"/>
    <property type="evidence" value="ECO:0007669"/>
    <property type="project" value="UniProtKB-UniRule"/>
</dbReference>
<dbReference type="GO" id="GO:0030170">
    <property type="term" value="F:pyridoxal phosphate binding"/>
    <property type="evidence" value="ECO:0007669"/>
    <property type="project" value="InterPro"/>
</dbReference>
<dbReference type="GO" id="GO:0008483">
    <property type="term" value="F:transaminase activity"/>
    <property type="evidence" value="ECO:0007669"/>
    <property type="project" value="InterPro"/>
</dbReference>
<dbReference type="GO" id="GO:0015995">
    <property type="term" value="P:chlorophyll biosynthetic process"/>
    <property type="evidence" value="ECO:0007669"/>
    <property type="project" value="UniProtKB-UniRule"/>
</dbReference>
<dbReference type="GO" id="GO:0006782">
    <property type="term" value="P:protoporphyrinogen IX biosynthetic process"/>
    <property type="evidence" value="ECO:0007669"/>
    <property type="project" value="UniProtKB-UniRule"/>
</dbReference>
<dbReference type="CDD" id="cd00610">
    <property type="entry name" value="OAT_like"/>
    <property type="match status" value="1"/>
</dbReference>
<dbReference type="FunFam" id="3.40.640.10:FF:000021">
    <property type="entry name" value="Glutamate-1-semialdehyde 2,1-aminomutase"/>
    <property type="match status" value="1"/>
</dbReference>
<dbReference type="FunFam" id="3.90.1150.10:FF:000012">
    <property type="entry name" value="Glutamate-1-semialdehyde 2,1-aminomutase"/>
    <property type="match status" value="1"/>
</dbReference>
<dbReference type="Gene3D" id="3.90.1150.10">
    <property type="entry name" value="Aspartate Aminotransferase, domain 1"/>
    <property type="match status" value="1"/>
</dbReference>
<dbReference type="Gene3D" id="3.40.640.10">
    <property type="entry name" value="Type I PLP-dependent aspartate aminotransferase-like (Major domain)"/>
    <property type="match status" value="1"/>
</dbReference>
<dbReference type="HAMAP" id="MF_00375">
    <property type="entry name" value="HemL_aminotrans_3"/>
    <property type="match status" value="1"/>
</dbReference>
<dbReference type="InterPro" id="IPR004639">
    <property type="entry name" value="4pyrrol_synth_GluAld_NH2Trfase"/>
</dbReference>
<dbReference type="InterPro" id="IPR005814">
    <property type="entry name" value="Aminotrans_3"/>
</dbReference>
<dbReference type="InterPro" id="IPR049704">
    <property type="entry name" value="Aminotrans_3_PPA_site"/>
</dbReference>
<dbReference type="InterPro" id="IPR015424">
    <property type="entry name" value="PyrdxlP-dep_Trfase"/>
</dbReference>
<dbReference type="InterPro" id="IPR015421">
    <property type="entry name" value="PyrdxlP-dep_Trfase_major"/>
</dbReference>
<dbReference type="InterPro" id="IPR015422">
    <property type="entry name" value="PyrdxlP-dep_Trfase_small"/>
</dbReference>
<dbReference type="NCBIfam" id="TIGR00713">
    <property type="entry name" value="hemL"/>
    <property type="match status" value="1"/>
</dbReference>
<dbReference type="NCBIfam" id="NF000818">
    <property type="entry name" value="PRK00062.1"/>
    <property type="match status" value="1"/>
</dbReference>
<dbReference type="PANTHER" id="PTHR43713">
    <property type="entry name" value="GLUTAMATE-1-SEMIALDEHYDE 2,1-AMINOMUTASE"/>
    <property type="match status" value="1"/>
</dbReference>
<dbReference type="PANTHER" id="PTHR43713:SF3">
    <property type="entry name" value="GLUTAMATE-1-SEMIALDEHYDE 2,1-AMINOMUTASE 1, CHLOROPLASTIC-RELATED"/>
    <property type="match status" value="1"/>
</dbReference>
<dbReference type="Pfam" id="PF00202">
    <property type="entry name" value="Aminotran_3"/>
    <property type="match status" value="1"/>
</dbReference>
<dbReference type="SUPFAM" id="SSF53383">
    <property type="entry name" value="PLP-dependent transferases"/>
    <property type="match status" value="1"/>
</dbReference>
<dbReference type="PROSITE" id="PS00600">
    <property type="entry name" value="AA_TRANSFER_CLASS_3"/>
    <property type="match status" value="1"/>
</dbReference>
<proteinExistence type="inferred from homology"/>
<organism>
    <name type="scientific">Gloeobacter violaceus (strain ATCC 29082 / PCC 7421)</name>
    <dbReference type="NCBI Taxonomy" id="251221"/>
    <lineage>
        <taxon>Bacteria</taxon>
        <taxon>Bacillati</taxon>
        <taxon>Cyanobacteriota</taxon>
        <taxon>Cyanophyceae</taxon>
        <taxon>Gloeobacterales</taxon>
        <taxon>Gloeobacteraceae</taxon>
        <taxon>Gloeobacter</taxon>
    </lineage>
</organism>
<comment type="catalytic activity">
    <reaction evidence="1">
        <text>(S)-4-amino-5-oxopentanoate = 5-aminolevulinate</text>
        <dbReference type="Rhea" id="RHEA:14265"/>
        <dbReference type="ChEBI" id="CHEBI:57501"/>
        <dbReference type="ChEBI" id="CHEBI:356416"/>
        <dbReference type="EC" id="5.4.3.8"/>
    </reaction>
</comment>
<comment type="cofactor">
    <cofactor evidence="1">
        <name>pyridoxal 5'-phosphate</name>
        <dbReference type="ChEBI" id="CHEBI:597326"/>
    </cofactor>
</comment>
<comment type="pathway">
    <text evidence="1">Porphyrin-containing compound metabolism; protoporphyrin-IX biosynthesis; 5-aminolevulinate from L-glutamyl-tRNA(Glu): step 2/2.</text>
</comment>
<comment type="pathway">
    <text evidence="1">Porphyrin-containing compound metabolism; chlorophyll biosynthesis.</text>
</comment>
<comment type="subunit">
    <text evidence="1">Homodimer.</text>
</comment>
<comment type="subcellular location">
    <subcellularLocation>
        <location evidence="1">Cytoplasm</location>
    </subcellularLocation>
</comment>
<comment type="similarity">
    <text evidence="1">Belongs to the class-III pyridoxal-phosphate-dependent aminotransferase family. HemL subfamily.</text>
</comment>
<gene>
    <name evidence="1" type="primary">hemL</name>
    <name type="ordered locus">glr0071</name>
</gene>
<protein>
    <recommendedName>
        <fullName evidence="1">Glutamate-1-semialdehyde 2,1-aminomutase</fullName>
        <shortName evidence="1">GSA</shortName>
        <ecNumber evidence="1">5.4.3.8</ecNumber>
    </recommendedName>
    <alternativeName>
        <fullName evidence="1">Glutamate-1-semialdehyde aminotransferase</fullName>
        <shortName evidence="1">GSA-AT</shortName>
    </alternativeName>
</protein>
<sequence>MVTSAFQTAQSHRLFAEAQQLMPGGVNSPVRAFKSVGSEPVFIERAEGAYLWDVDGNRYIEYINTWGPSIVGHSHPEVISALREALPKGTSYGAPTRLENQMARTVIDAIPAVEMVRFVNSGTEATMSALRLARAFTGREKIIKFEGCYHGHADMLLVQAGSGVATLGLPDSPGVPKSTTAATLTAPYNDLAAVEALFKQYPSDVAGLILEPVVGNAGCLVPEIGFLEGLRDLTHAHGTVLIFDEVMTGFRLSYGGAQARYGIEPDLTCLGKIIGGGLPVGAYAGRREIMQMVAPAGPMYQAGTLSGNPLAMTAGIKTLEILQRPGTYERLEGLSARLADGLLAAAREAGHAATGNRVGAMFTLFFTEGPVRNFADAKRSDLQKFARFHRGMLERGVYLAPSQFEAGFMSLAHTEEDIDYTVAAARTVLAAL</sequence>